<gene>
    <name type="primary">yfmK</name>
    <name type="ordered locus">BSU07440</name>
</gene>
<reference key="1">
    <citation type="journal article" date="1997" name="Gene">
        <title>Cloning and sequencing of a 35.7 kb in the 70 degree-73 degree region of the Bacillus subtilis genome reveal genes for a new two-component system, three spore germination proteins, an iron uptake system and a general stress response protein.</title>
        <authorList>
            <person name="Yamamoto H."/>
            <person name="Uchiyama S."/>
            <person name="Nugroho F.A."/>
            <person name="Sekiguchi J."/>
        </authorList>
    </citation>
    <scope>NUCLEOTIDE SEQUENCE [GENOMIC DNA]</scope>
    <source>
        <strain>168 / AC327</strain>
    </source>
</reference>
<reference key="2">
    <citation type="journal article" date="1997" name="Nature">
        <title>The complete genome sequence of the Gram-positive bacterium Bacillus subtilis.</title>
        <authorList>
            <person name="Kunst F."/>
            <person name="Ogasawara N."/>
            <person name="Moszer I."/>
            <person name="Albertini A.M."/>
            <person name="Alloni G."/>
            <person name="Azevedo V."/>
            <person name="Bertero M.G."/>
            <person name="Bessieres P."/>
            <person name="Bolotin A."/>
            <person name="Borchert S."/>
            <person name="Borriss R."/>
            <person name="Boursier L."/>
            <person name="Brans A."/>
            <person name="Braun M."/>
            <person name="Brignell S.C."/>
            <person name="Bron S."/>
            <person name="Brouillet S."/>
            <person name="Bruschi C.V."/>
            <person name="Caldwell B."/>
            <person name="Capuano V."/>
            <person name="Carter N.M."/>
            <person name="Choi S.-K."/>
            <person name="Codani J.-J."/>
            <person name="Connerton I.F."/>
            <person name="Cummings N.J."/>
            <person name="Daniel R.A."/>
            <person name="Denizot F."/>
            <person name="Devine K.M."/>
            <person name="Duesterhoeft A."/>
            <person name="Ehrlich S.D."/>
            <person name="Emmerson P.T."/>
            <person name="Entian K.-D."/>
            <person name="Errington J."/>
            <person name="Fabret C."/>
            <person name="Ferrari E."/>
            <person name="Foulger D."/>
            <person name="Fritz C."/>
            <person name="Fujita M."/>
            <person name="Fujita Y."/>
            <person name="Fuma S."/>
            <person name="Galizzi A."/>
            <person name="Galleron N."/>
            <person name="Ghim S.-Y."/>
            <person name="Glaser P."/>
            <person name="Goffeau A."/>
            <person name="Golightly E.J."/>
            <person name="Grandi G."/>
            <person name="Guiseppi G."/>
            <person name="Guy B.J."/>
            <person name="Haga K."/>
            <person name="Haiech J."/>
            <person name="Harwood C.R."/>
            <person name="Henaut A."/>
            <person name="Hilbert H."/>
            <person name="Holsappel S."/>
            <person name="Hosono S."/>
            <person name="Hullo M.-F."/>
            <person name="Itaya M."/>
            <person name="Jones L.-M."/>
            <person name="Joris B."/>
            <person name="Karamata D."/>
            <person name="Kasahara Y."/>
            <person name="Klaerr-Blanchard M."/>
            <person name="Klein C."/>
            <person name="Kobayashi Y."/>
            <person name="Koetter P."/>
            <person name="Koningstein G."/>
            <person name="Krogh S."/>
            <person name="Kumano M."/>
            <person name="Kurita K."/>
            <person name="Lapidus A."/>
            <person name="Lardinois S."/>
            <person name="Lauber J."/>
            <person name="Lazarevic V."/>
            <person name="Lee S.-M."/>
            <person name="Levine A."/>
            <person name="Liu H."/>
            <person name="Masuda S."/>
            <person name="Mauel C."/>
            <person name="Medigue C."/>
            <person name="Medina N."/>
            <person name="Mellado R.P."/>
            <person name="Mizuno M."/>
            <person name="Moestl D."/>
            <person name="Nakai S."/>
            <person name="Noback M."/>
            <person name="Noone D."/>
            <person name="O'Reilly M."/>
            <person name="Ogawa K."/>
            <person name="Ogiwara A."/>
            <person name="Oudega B."/>
            <person name="Park S.-H."/>
            <person name="Parro V."/>
            <person name="Pohl T.M."/>
            <person name="Portetelle D."/>
            <person name="Porwollik S."/>
            <person name="Prescott A.M."/>
            <person name="Presecan E."/>
            <person name="Pujic P."/>
            <person name="Purnelle B."/>
            <person name="Rapoport G."/>
            <person name="Rey M."/>
            <person name="Reynolds S."/>
            <person name="Rieger M."/>
            <person name="Rivolta C."/>
            <person name="Rocha E."/>
            <person name="Roche B."/>
            <person name="Rose M."/>
            <person name="Sadaie Y."/>
            <person name="Sato T."/>
            <person name="Scanlan E."/>
            <person name="Schleich S."/>
            <person name="Schroeter R."/>
            <person name="Scoffone F."/>
            <person name="Sekiguchi J."/>
            <person name="Sekowska A."/>
            <person name="Seror S.J."/>
            <person name="Serror P."/>
            <person name="Shin B.-S."/>
            <person name="Soldo B."/>
            <person name="Sorokin A."/>
            <person name="Tacconi E."/>
            <person name="Takagi T."/>
            <person name="Takahashi H."/>
            <person name="Takemaru K."/>
            <person name="Takeuchi M."/>
            <person name="Tamakoshi A."/>
            <person name="Tanaka T."/>
            <person name="Terpstra P."/>
            <person name="Tognoni A."/>
            <person name="Tosato V."/>
            <person name="Uchiyama S."/>
            <person name="Vandenbol M."/>
            <person name="Vannier F."/>
            <person name="Vassarotti A."/>
            <person name="Viari A."/>
            <person name="Wambutt R."/>
            <person name="Wedler E."/>
            <person name="Wedler H."/>
            <person name="Weitzenegger T."/>
            <person name="Winters P."/>
            <person name="Wipat A."/>
            <person name="Yamamoto H."/>
            <person name="Yamane K."/>
            <person name="Yasumoto K."/>
            <person name="Yata K."/>
            <person name="Yoshida K."/>
            <person name="Yoshikawa H.-F."/>
            <person name="Zumstein E."/>
            <person name="Yoshikawa H."/>
            <person name="Danchin A."/>
        </authorList>
    </citation>
    <scope>NUCLEOTIDE SEQUENCE [LARGE SCALE GENOMIC DNA]</scope>
    <source>
        <strain>168</strain>
    </source>
</reference>
<comment type="similarity">
    <text evidence="2">Belongs to the acetyltransferase family.</text>
</comment>
<dbReference type="EC" id="2.3.1.-"/>
<dbReference type="EMBL" id="D86417">
    <property type="protein sequence ID" value="BAA22325.1"/>
    <property type="molecule type" value="Genomic_DNA"/>
</dbReference>
<dbReference type="EMBL" id="AL009126">
    <property type="protein sequence ID" value="CAB12573.1"/>
    <property type="molecule type" value="Genomic_DNA"/>
</dbReference>
<dbReference type="PIR" id="B69813">
    <property type="entry name" value="B69813"/>
</dbReference>
<dbReference type="RefSeq" id="NP_388625.1">
    <property type="nucleotide sequence ID" value="NC_000964.3"/>
</dbReference>
<dbReference type="RefSeq" id="WP_003243349.1">
    <property type="nucleotide sequence ID" value="NZ_OZ025638.1"/>
</dbReference>
<dbReference type="SMR" id="O34536"/>
<dbReference type="FunCoup" id="O34536">
    <property type="interactions" value="80"/>
</dbReference>
<dbReference type="STRING" id="224308.BSU07440"/>
<dbReference type="PaxDb" id="224308-BSU07440"/>
<dbReference type="EnsemblBacteria" id="CAB12573">
    <property type="protein sequence ID" value="CAB12573"/>
    <property type="gene ID" value="BSU_07440"/>
</dbReference>
<dbReference type="GeneID" id="936108"/>
<dbReference type="KEGG" id="bsu:BSU07440"/>
<dbReference type="PATRIC" id="fig|224308.179.peg.807"/>
<dbReference type="eggNOG" id="COG0456">
    <property type="taxonomic scope" value="Bacteria"/>
</dbReference>
<dbReference type="InParanoid" id="O34536"/>
<dbReference type="OrthoDB" id="34330at2"/>
<dbReference type="BioCyc" id="BSUB:BSU07440-MONOMER"/>
<dbReference type="BRENDA" id="2.3.1.48">
    <property type="organism ID" value="658"/>
</dbReference>
<dbReference type="Proteomes" id="UP000001570">
    <property type="component" value="Chromosome"/>
</dbReference>
<dbReference type="GO" id="GO:0016747">
    <property type="term" value="F:acyltransferase activity, transferring groups other than amino-acyl groups"/>
    <property type="evidence" value="ECO:0007669"/>
    <property type="project" value="InterPro"/>
</dbReference>
<dbReference type="CDD" id="cd04301">
    <property type="entry name" value="NAT_SF"/>
    <property type="match status" value="1"/>
</dbReference>
<dbReference type="Gene3D" id="3.40.630.30">
    <property type="match status" value="1"/>
</dbReference>
<dbReference type="InterPro" id="IPR016181">
    <property type="entry name" value="Acyl_CoA_acyltransferase"/>
</dbReference>
<dbReference type="InterPro" id="IPR000182">
    <property type="entry name" value="GNAT_dom"/>
</dbReference>
<dbReference type="InterPro" id="IPR052829">
    <property type="entry name" value="N-acetyltransferase_domain"/>
</dbReference>
<dbReference type="PANTHER" id="PTHR43259:SF1">
    <property type="entry name" value="N-ACETYLTRANSFERASE DOMAIN-CONTAINING PROTEIN"/>
    <property type="match status" value="1"/>
</dbReference>
<dbReference type="PANTHER" id="PTHR43259">
    <property type="entry name" value="SPT10P"/>
    <property type="match status" value="1"/>
</dbReference>
<dbReference type="Pfam" id="PF00583">
    <property type="entry name" value="Acetyltransf_1"/>
    <property type="match status" value="1"/>
</dbReference>
<dbReference type="SUPFAM" id="SSF55729">
    <property type="entry name" value="Acyl-CoA N-acyltransferases (Nat)"/>
    <property type="match status" value="1"/>
</dbReference>
<dbReference type="PROSITE" id="PS51186">
    <property type="entry name" value="GNAT"/>
    <property type="match status" value="1"/>
</dbReference>
<evidence type="ECO:0000255" key="1">
    <source>
        <dbReference type="PROSITE-ProRule" id="PRU00532"/>
    </source>
</evidence>
<evidence type="ECO:0000305" key="2"/>
<name>YFMK_BACSU</name>
<sequence>MASIDRFQVMQEPELKILEHWFENEDTRRRMDGMLLLDEWYARVNKDKHDTVIMAYDGQLPAGMVVIEFGEERTYIGLIVNPLYRLKGYGKQILQKLMTEPDFTSVREWVACIEEDNRISLACFQAAGFTLEDTEPDEDGFLTLILRN</sequence>
<accession>O34536</accession>
<accession>Q79ES6</accession>
<keyword id="KW-0012">Acyltransferase</keyword>
<keyword id="KW-1185">Reference proteome</keyword>
<keyword id="KW-0808">Transferase</keyword>
<proteinExistence type="inferred from homology"/>
<feature type="chain" id="PRO_0000360210" description="Uncharacterized N-acetyltransferase YfmK">
    <location>
        <begin position="1"/>
        <end position="148"/>
    </location>
</feature>
<feature type="domain" description="N-acetyltransferase" evidence="1">
    <location>
        <begin position="8"/>
        <end position="148"/>
    </location>
</feature>
<organism>
    <name type="scientific">Bacillus subtilis (strain 168)</name>
    <dbReference type="NCBI Taxonomy" id="224308"/>
    <lineage>
        <taxon>Bacteria</taxon>
        <taxon>Bacillati</taxon>
        <taxon>Bacillota</taxon>
        <taxon>Bacilli</taxon>
        <taxon>Bacillales</taxon>
        <taxon>Bacillaceae</taxon>
        <taxon>Bacillus</taxon>
    </lineage>
</organism>
<protein>
    <recommendedName>
        <fullName>Uncharacterized N-acetyltransferase YfmK</fullName>
        <ecNumber>2.3.1.-</ecNumber>
    </recommendedName>
</protein>